<accession>Q3JMP9</accession>
<proteinExistence type="inferred from homology"/>
<comment type="function">
    <text evidence="1">Forms part of the ribosomal stalk which helps the ribosome interact with GTP-bound translation factors.</text>
</comment>
<comment type="subunit">
    <text evidence="1">Part of the ribosomal stalk of the 50S ribosomal subunit. Interacts with L10 and the large rRNA to form the base of the stalk. L10 forms an elongated spine to which L12 dimers bind in a sequential fashion forming a multimeric L10(L12)X complex.</text>
</comment>
<comment type="PTM">
    <text evidence="1">One or more lysine residues are methylated.</text>
</comment>
<comment type="similarity">
    <text evidence="1">Belongs to the universal ribosomal protein uL11 family.</text>
</comment>
<sequence length="143" mass="14959">MAKKIVGFIKLQIPAGKANPSPPVGPALGQRGLNIMEFCKAFNAQTQGMEPGLPVPVVITAYADKSFTFVMKTPPATVLIKKAAKVDKGSSKPHTDKVGKITRAQAEEIAKTKMPDLTAADLDAAVRTIAGSARSMGITVEGV</sequence>
<dbReference type="EMBL" id="CP000124">
    <property type="protein sequence ID" value="ABA48111.1"/>
    <property type="molecule type" value="Genomic_DNA"/>
</dbReference>
<dbReference type="RefSeq" id="WP_004198368.1">
    <property type="nucleotide sequence ID" value="NC_007434.1"/>
</dbReference>
<dbReference type="SMR" id="Q3JMP9"/>
<dbReference type="EnsemblBacteria" id="ABA48111">
    <property type="protein sequence ID" value="ABA48111"/>
    <property type="gene ID" value="BURPS1710b_3790"/>
</dbReference>
<dbReference type="GeneID" id="93061845"/>
<dbReference type="KEGG" id="bpm:BURPS1710b_3790"/>
<dbReference type="HOGENOM" id="CLU_074237_2_0_4"/>
<dbReference type="Proteomes" id="UP000002700">
    <property type="component" value="Chromosome I"/>
</dbReference>
<dbReference type="GO" id="GO:0022625">
    <property type="term" value="C:cytosolic large ribosomal subunit"/>
    <property type="evidence" value="ECO:0007669"/>
    <property type="project" value="TreeGrafter"/>
</dbReference>
<dbReference type="GO" id="GO:0070180">
    <property type="term" value="F:large ribosomal subunit rRNA binding"/>
    <property type="evidence" value="ECO:0007669"/>
    <property type="project" value="UniProtKB-UniRule"/>
</dbReference>
<dbReference type="GO" id="GO:0003735">
    <property type="term" value="F:structural constituent of ribosome"/>
    <property type="evidence" value="ECO:0007669"/>
    <property type="project" value="InterPro"/>
</dbReference>
<dbReference type="GO" id="GO:0006412">
    <property type="term" value="P:translation"/>
    <property type="evidence" value="ECO:0007669"/>
    <property type="project" value="UniProtKB-UniRule"/>
</dbReference>
<dbReference type="CDD" id="cd00349">
    <property type="entry name" value="Ribosomal_L11"/>
    <property type="match status" value="1"/>
</dbReference>
<dbReference type="FunFam" id="1.10.10.250:FF:000001">
    <property type="entry name" value="50S ribosomal protein L11"/>
    <property type="match status" value="1"/>
</dbReference>
<dbReference type="FunFam" id="3.30.1550.10:FF:000001">
    <property type="entry name" value="50S ribosomal protein L11"/>
    <property type="match status" value="1"/>
</dbReference>
<dbReference type="Gene3D" id="1.10.10.250">
    <property type="entry name" value="Ribosomal protein L11, C-terminal domain"/>
    <property type="match status" value="1"/>
</dbReference>
<dbReference type="Gene3D" id="3.30.1550.10">
    <property type="entry name" value="Ribosomal protein L11/L12, N-terminal domain"/>
    <property type="match status" value="1"/>
</dbReference>
<dbReference type="HAMAP" id="MF_00736">
    <property type="entry name" value="Ribosomal_uL11"/>
    <property type="match status" value="1"/>
</dbReference>
<dbReference type="InterPro" id="IPR000911">
    <property type="entry name" value="Ribosomal_uL11"/>
</dbReference>
<dbReference type="InterPro" id="IPR006519">
    <property type="entry name" value="Ribosomal_uL11_bac-typ"/>
</dbReference>
<dbReference type="InterPro" id="IPR020783">
    <property type="entry name" value="Ribosomal_uL11_C"/>
</dbReference>
<dbReference type="InterPro" id="IPR036769">
    <property type="entry name" value="Ribosomal_uL11_C_sf"/>
</dbReference>
<dbReference type="InterPro" id="IPR020785">
    <property type="entry name" value="Ribosomal_uL11_CS"/>
</dbReference>
<dbReference type="InterPro" id="IPR020784">
    <property type="entry name" value="Ribosomal_uL11_N"/>
</dbReference>
<dbReference type="InterPro" id="IPR036796">
    <property type="entry name" value="Ribosomal_uL11_N_sf"/>
</dbReference>
<dbReference type="NCBIfam" id="TIGR01632">
    <property type="entry name" value="L11_bact"/>
    <property type="match status" value="1"/>
</dbReference>
<dbReference type="PANTHER" id="PTHR11661">
    <property type="entry name" value="60S RIBOSOMAL PROTEIN L12"/>
    <property type="match status" value="1"/>
</dbReference>
<dbReference type="PANTHER" id="PTHR11661:SF1">
    <property type="entry name" value="LARGE RIBOSOMAL SUBUNIT PROTEIN UL11M"/>
    <property type="match status" value="1"/>
</dbReference>
<dbReference type="Pfam" id="PF00298">
    <property type="entry name" value="Ribosomal_L11"/>
    <property type="match status" value="1"/>
</dbReference>
<dbReference type="Pfam" id="PF03946">
    <property type="entry name" value="Ribosomal_L11_N"/>
    <property type="match status" value="1"/>
</dbReference>
<dbReference type="SMART" id="SM00649">
    <property type="entry name" value="RL11"/>
    <property type="match status" value="1"/>
</dbReference>
<dbReference type="SUPFAM" id="SSF54747">
    <property type="entry name" value="Ribosomal L11/L12e N-terminal domain"/>
    <property type="match status" value="1"/>
</dbReference>
<dbReference type="SUPFAM" id="SSF46906">
    <property type="entry name" value="Ribosomal protein L11, C-terminal domain"/>
    <property type="match status" value="1"/>
</dbReference>
<dbReference type="PROSITE" id="PS00359">
    <property type="entry name" value="RIBOSOMAL_L11"/>
    <property type="match status" value="1"/>
</dbReference>
<name>RL11_BURP1</name>
<keyword id="KW-0488">Methylation</keyword>
<keyword id="KW-0687">Ribonucleoprotein</keyword>
<keyword id="KW-0689">Ribosomal protein</keyword>
<keyword id="KW-0694">RNA-binding</keyword>
<keyword id="KW-0699">rRNA-binding</keyword>
<evidence type="ECO:0000255" key="1">
    <source>
        <dbReference type="HAMAP-Rule" id="MF_00736"/>
    </source>
</evidence>
<evidence type="ECO:0000305" key="2"/>
<reference key="1">
    <citation type="journal article" date="2010" name="Genome Biol. Evol.">
        <title>Continuing evolution of Burkholderia mallei through genome reduction and large-scale rearrangements.</title>
        <authorList>
            <person name="Losada L."/>
            <person name="Ronning C.M."/>
            <person name="DeShazer D."/>
            <person name="Woods D."/>
            <person name="Fedorova N."/>
            <person name="Kim H.S."/>
            <person name="Shabalina S.A."/>
            <person name="Pearson T.R."/>
            <person name="Brinkac L."/>
            <person name="Tan P."/>
            <person name="Nandi T."/>
            <person name="Crabtree J."/>
            <person name="Badger J."/>
            <person name="Beckstrom-Sternberg S."/>
            <person name="Saqib M."/>
            <person name="Schutzer S.E."/>
            <person name="Keim P."/>
            <person name="Nierman W.C."/>
        </authorList>
    </citation>
    <scope>NUCLEOTIDE SEQUENCE [LARGE SCALE GENOMIC DNA]</scope>
    <source>
        <strain>1710b</strain>
    </source>
</reference>
<gene>
    <name evidence="1" type="primary">rplK</name>
    <name type="ordered locus">BURPS1710b_3790</name>
</gene>
<feature type="chain" id="PRO_0000258129" description="Large ribosomal subunit protein uL11">
    <location>
        <begin position="1"/>
        <end position="143"/>
    </location>
</feature>
<organism>
    <name type="scientific">Burkholderia pseudomallei (strain 1710b)</name>
    <dbReference type="NCBI Taxonomy" id="320372"/>
    <lineage>
        <taxon>Bacteria</taxon>
        <taxon>Pseudomonadati</taxon>
        <taxon>Pseudomonadota</taxon>
        <taxon>Betaproteobacteria</taxon>
        <taxon>Burkholderiales</taxon>
        <taxon>Burkholderiaceae</taxon>
        <taxon>Burkholderia</taxon>
        <taxon>pseudomallei group</taxon>
    </lineage>
</organism>
<protein>
    <recommendedName>
        <fullName evidence="1">Large ribosomal subunit protein uL11</fullName>
    </recommendedName>
    <alternativeName>
        <fullName evidence="2">50S ribosomal protein L11</fullName>
    </alternativeName>
</protein>